<organism>
    <name type="scientific">Mycobacterium bovis (strain ATCC BAA-935 / AF2122/97)</name>
    <dbReference type="NCBI Taxonomy" id="233413"/>
    <lineage>
        <taxon>Bacteria</taxon>
        <taxon>Bacillati</taxon>
        <taxon>Actinomycetota</taxon>
        <taxon>Actinomycetes</taxon>
        <taxon>Mycobacteriales</taxon>
        <taxon>Mycobacteriaceae</taxon>
        <taxon>Mycobacterium</taxon>
        <taxon>Mycobacterium tuberculosis complex</taxon>
    </lineage>
</organism>
<evidence type="ECO:0000255" key="1">
    <source>
        <dbReference type="HAMAP-Rule" id="MF_00160"/>
    </source>
</evidence>
<keyword id="KW-0028">Amino-acid biosynthesis</keyword>
<keyword id="KW-0032">Aminotransferase</keyword>
<keyword id="KW-0963">Cytoplasm</keyword>
<keyword id="KW-0663">Pyridoxal phosphate</keyword>
<keyword id="KW-0664">Pyridoxine biosynthesis</keyword>
<keyword id="KW-1185">Reference proteome</keyword>
<keyword id="KW-0718">Serine biosynthesis</keyword>
<keyword id="KW-0808">Transferase</keyword>
<sequence>MADQLTPHLEIPTAIKPRDGRFGSGPSKVRLEQLQTLTTTAAALFGTSHRQAPVKNLVGRVRSGLAELFSLPDGYEVILGNGGATAFWDAAAFGLIDKRSLHLTYGEFSAKFASAVSKNPFVGEPIIITSDPGSAPEPQTDPSVDVIAWAHNETSTGVAVAVRRPEGSDDALVVIDATSGAGGLPVDIAETDAYYFAPQKNFASDGGLWLAIMSPAALSRIEAIAATGRWVPDFLSLPIAVENSLKNQTYNTPAIATLALLAEQIDWLVGNGGLDWAVKRTADSSQRLYSWAQERPYTTPFVTDPGLRSQVVGTIDFVDDVDAGTVAKILRANGIVDTEPYRKLGRNQLRVAMFPAVEPDDVSALTECVDWVVERL</sequence>
<dbReference type="EC" id="2.6.1.52" evidence="1"/>
<dbReference type="EMBL" id="LT708304">
    <property type="protein sequence ID" value="SIT99506.1"/>
    <property type="molecule type" value="Genomic_DNA"/>
</dbReference>
<dbReference type="RefSeq" id="NP_854565.1">
    <property type="nucleotide sequence ID" value="NC_002945.3"/>
</dbReference>
<dbReference type="RefSeq" id="WP_003404623.1">
    <property type="nucleotide sequence ID" value="NC_002945.4"/>
</dbReference>
<dbReference type="SMR" id="P63515"/>
<dbReference type="KEGG" id="mbo:BQ2027_MB0908C"/>
<dbReference type="PATRIC" id="fig|233413.5.peg.988"/>
<dbReference type="UniPathway" id="UPA00135">
    <property type="reaction ID" value="UER00197"/>
</dbReference>
<dbReference type="UniPathway" id="UPA00244">
    <property type="reaction ID" value="UER00311"/>
</dbReference>
<dbReference type="Proteomes" id="UP000001419">
    <property type="component" value="Chromosome"/>
</dbReference>
<dbReference type="GO" id="GO:0005737">
    <property type="term" value="C:cytoplasm"/>
    <property type="evidence" value="ECO:0007669"/>
    <property type="project" value="UniProtKB-SubCell"/>
</dbReference>
<dbReference type="GO" id="GO:0008453">
    <property type="term" value="F:alanine-glyoxylate transaminase activity"/>
    <property type="evidence" value="ECO:0007669"/>
    <property type="project" value="TreeGrafter"/>
</dbReference>
<dbReference type="GO" id="GO:0004760">
    <property type="term" value="F:L-serine-pyruvate transaminase activity"/>
    <property type="evidence" value="ECO:0007669"/>
    <property type="project" value="TreeGrafter"/>
</dbReference>
<dbReference type="GO" id="GO:0004648">
    <property type="term" value="F:O-phospho-L-serine:2-oxoglutarate aminotransferase activity"/>
    <property type="evidence" value="ECO:0007669"/>
    <property type="project" value="UniProtKB-UniRule"/>
</dbReference>
<dbReference type="GO" id="GO:0030170">
    <property type="term" value="F:pyridoxal phosphate binding"/>
    <property type="evidence" value="ECO:0007669"/>
    <property type="project" value="UniProtKB-UniRule"/>
</dbReference>
<dbReference type="GO" id="GO:0019265">
    <property type="term" value="P:glycine biosynthetic process, by transamination of glyoxylate"/>
    <property type="evidence" value="ECO:0007669"/>
    <property type="project" value="TreeGrafter"/>
</dbReference>
<dbReference type="GO" id="GO:0006564">
    <property type="term" value="P:L-serine biosynthetic process"/>
    <property type="evidence" value="ECO:0007669"/>
    <property type="project" value="UniProtKB-UniRule"/>
</dbReference>
<dbReference type="GO" id="GO:0008615">
    <property type="term" value="P:pyridoxine biosynthetic process"/>
    <property type="evidence" value="ECO:0007669"/>
    <property type="project" value="UniProtKB-UniRule"/>
</dbReference>
<dbReference type="FunFam" id="3.90.1150.10:FF:000084">
    <property type="entry name" value="Phosphoserine aminotransferase"/>
    <property type="match status" value="1"/>
</dbReference>
<dbReference type="Gene3D" id="3.90.1150.10">
    <property type="entry name" value="Aspartate Aminotransferase, domain 1"/>
    <property type="match status" value="1"/>
</dbReference>
<dbReference type="Gene3D" id="3.40.640.10">
    <property type="entry name" value="Type I PLP-dependent aspartate aminotransferase-like (Major domain)"/>
    <property type="match status" value="1"/>
</dbReference>
<dbReference type="HAMAP" id="MF_00160">
    <property type="entry name" value="SerC_aminotrans_5"/>
    <property type="match status" value="1"/>
</dbReference>
<dbReference type="InterPro" id="IPR000192">
    <property type="entry name" value="Aminotrans_V_dom"/>
</dbReference>
<dbReference type="InterPro" id="IPR022278">
    <property type="entry name" value="Pser_aminoTfrase"/>
</dbReference>
<dbReference type="InterPro" id="IPR006272">
    <property type="entry name" value="Pser_aminoTfrase_mycobac"/>
</dbReference>
<dbReference type="InterPro" id="IPR015424">
    <property type="entry name" value="PyrdxlP-dep_Trfase"/>
</dbReference>
<dbReference type="InterPro" id="IPR015421">
    <property type="entry name" value="PyrdxlP-dep_Trfase_major"/>
</dbReference>
<dbReference type="InterPro" id="IPR015422">
    <property type="entry name" value="PyrdxlP-dep_Trfase_small"/>
</dbReference>
<dbReference type="NCBIfam" id="TIGR01366">
    <property type="entry name" value="serC_3"/>
    <property type="match status" value="1"/>
</dbReference>
<dbReference type="PANTHER" id="PTHR21152:SF40">
    <property type="entry name" value="ALANINE--GLYOXYLATE AMINOTRANSFERASE"/>
    <property type="match status" value="1"/>
</dbReference>
<dbReference type="PANTHER" id="PTHR21152">
    <property type="entry name" value="AMINOTRANSFERASE CLASS V"/>
    <property type="match status" value="1"/>
</dbReference>
<dbReference type="Pfam" id="PF00266">
    <property type="entry name" value="Aminotran_5"/>
    <property type="match status" value="1"/>
</dbReference>
<dbReference type="PIRSF" id="PIRSF000525">
    <property type="entry name" value="SerC"/>
    <property type="match status" value="1"/>
</dbReference>
<dbReference type="SUPFAM" id="SSF53383">
    <property type="entry name" value="PLP-dependent transferases"/>
    <property type="match status" value="1"/>
</dbReference>
<comment type="function">
    <text evidence="1">Catalyzes the reversible conversion of 3-phosphohydroxypyruvate to phosphoserine and of 3-hydroxy-2-oxo-4-phosphonooxybutanoate to phosphohydroxythreonine.</text>
</comment>
<comment type="catalytic activity">
    <reaction evidence="1">
        <text>O-phospho-L-serine + 2-oxoglutarate = 3-phosphooxypyruvate + L-glutamate</text>
        <dbReference type="Rhea" id="RHEA:14329"/>
        <dbReference type="ChEBI" id="CHEBI:16810"/>
        <dbReference type="ChEBI" id="CHEBI:18110"/>
        <dbReference type="ChEBI" id="CHEBI:29985"/>
        <dbReference type="ChEBI" id="CHEBI:57524"/>
        <dbReference type="EC" id="2.6.1.52"/>
    </reaction>
</comment>
<comment type="catalytic activity">
    <reaction evidence="1">
        <text>4-(phosphooxy)-L-threonine + 2-oxoglutarate = (R)-3-hydroxy-2-oxo-4-phosphooxybutanoate + L-glutamate</text>
        <dbReference type="Rhea" id="RHEA:16573"/>
        <dbReference type="ChEBI" id="CHEBI:16810"/>
        <dbReference type="ChEBI" id="CHEBI:29985"/>
        <dbReference type="ChEBI" id="CHEBI:58452"/>
        <dbReference type="ChEBI" id="CHEBI:58538"/>
        <dbReference type="EC" id="2.6.1.52"/>
    </reaction>
</comment>
<comment type="cofactor">
    <cofactor evidence="1">
        <name>pyridoxal 5'-phosphate</name>
        <dbReference type="ChEBI" id="CHEBI:597326"/>
    </cofactor>
    <text evidence="1">Binds 1 pyridoxal phosphate per subunit.</text>
</comment>
<comment type="pathway">
    <text evidence="1">Amino-acid biosynthesis; L-serine biosynthesis; L-serine from 3-phospho-D-glycerate: step 2/3.</text>
</comment>
<comment type="pathway">
    <text evidence="1">Cofactor biosynthesis; pyridoxine 5'-phosphate biosynthesis; pyridoxine 5'-phosphate from D-erythrose 4-phosphate: step 3/5.</text>
</comment>
<comment type="subunit">
    <text evidence="1">Homodimer.</text>
</comment>
<comment type="subcellular location">
    <subcellularLocation>
        <location evidence="1">Cytoplasm</location>
    </subcellularLocation>
</comment>
<comment type="similarity">
    <text evidence="1">Belongs to the class-V pyridoxal-phosphate-dependent aminotransferase family. SerC subfamily.</text>
</comment>
<proteinExistence type="inferred from homology"/>
<accession>P63515</accession>
<accession>A0A1R3XWQ2</accession>
<accession>Q10534</accession>
<accession>X2BG34</accession>
<name>SERC_MYCBO</name>
<feature type="chain" id="PRO_0000150189" description="Putative phosphoserine aminotransferase">
    <location>
        <begin position="1"/>
        <end position="376"/>
    </location>
</feature>
<feature type="binding site" evidence="1">
    <location>
        <position position="50"/>
    </location>
    <ligand>
        <name>L-glutamate</name>
        <dbReference type="ChEBI" id="CHEBI:29985"/>
    </ligand>
</feature>
<feature type="binding site" evidence="1">
    <location>
        <begin position="84"/>
        <end position="85"/>
    </location>
    <ligand>
        <name>pyridoxal 5'-phosphate</name>
        <dbReference type="ChEBI" id="CHEBI:597326"/>
    </ligand>
</feature>
<feature type="binding site" evidence="1">
    <location>
        <position position="108"/>
    </location>
    <ligand>
        <name>pyridoxal 5'-phosphate</name>
        <dbReference type="ChEBI" id="CHEBI:597326"/>
    </ligand>
</feature>
<feature type="binding site" evidence="1">
    <location>
        <position position="154"/>
    </location>
    <ligand>
        <name>pyridoxal 5'-phosphate</name>
        <dbReference type="ChEBI" id="CHEBI:597326"/>
    </ligand>
</feature>
<feature type="binding site" evidence="1">
    <location>
        <position position="176"/>
    </location>
    <ligand>
        <name>pyridoxal 5'-phosphate</name>
        <dbReference type="ChEBI" id="CHEBI:597326"/>
    </ligand>
</feature>
<feature type="binding site" evidence="1">
    <location>
        <position position="199"/>
    </location>
    <ligand>
        <name>pyridoxal 5'-phosphate</name>
        <dbReference type="ChEBI" id="CHEBI:597326"/>
    </ligand>
</feature>
<feature type="binding site" evidence="1">
    <location>
        <begin position="251"/>
        <end position="252"/>
    </location>
    <ligand>
        <name>pyridoxal 5'-phosphate</name>
        <dbReference type="ChEBI" id="CHEBI:597326"/>
    </ligand>
</feature>
<feature type="modified residue" description="N6-(pyridoxal phosphate)lysine" evidence="1">
    <location>
        <position position="200"/>
    </location>
</feature>
<protein>
    <recommendedName>
        <fullName>Putative phosphoserine aminotransferase</fullName>
        <ecNumber evidence="1">2.6.1.52</ecNumber>
    </recommendedName>
    <alternativeName>
        <fullName evidence="1">Phosphohydroxythreonine aminotransferase</fullName>
        <shortName evidence="1">PSAT</shortName>
    </alternativeName>
</protein>
<gene>
    <name evidence="1" type="primary">serC</name>
    <name type="ordered locus">BQ2027_MB0908C</name>
</gene>
<reference key="1">
    <citation type="journal article" date="2003" name="Proc. Natl. Acad. Sci. U.S.A.">
        <title>The complete genome sequence of Mycobacterium bovis.</title>
        <authorList>
            <person name="Garnier T."/>
            <person name="Eiglmeier K."/>
            <person name="Camus J.-C."/>
            <person name="Medina N."/>
            <person name="Mansoor H."/>
            <person name="Pryor M."/>
            <person name="Duthoy S."/>
            <person name="Grondin S."/>
            <person name="Lacroix C."/>
            <person name="Monsempe C."/>
            <person name="Simon S."/>
            <person name="Harris B."/>
            <person name="Atkin R."/>
            <person name="Doggett J."/>
            <person name="Mayes R."/>
            <person name="Keating L."/>
            <person name="Wheeler P.R."/>
            <person name="Parkhill J."/>
            <person name="Barrell B.G."/>
            <person name="Cole S.T."/>
            <person name="Gordon S.V."/>
            <person name="Hewinson R.G."/>
        </authorList>
    </citation>
    <scope>NUCLEOTIDE SEQUENCE [LARGE SCALE GENOMIC DNA]</scope>
    <source>
        <strain>ATCC BAA-935 / AF2122/97</strain>
    </source>
</reference>
<reference key="2">
    <citation type="journal article" date="2017" name="Genome Announc.">
        <title>Updated reference genome sequence and annotation of Mycobacterium bovis AF2122/97.</title>
        <authorList>
            <person name="Malone K.M."/>
            <person name="Farrell D."/>
            <person name="Stuber T.P."/>
            <person name="Schubert O.T."/>
            <person name="Aebersold R."/>
            <person name="Robbe-Austerman S."/>
            <person name="Gordon S.V."/>
        </authorList>
    </citation>
    <scope>NUCLEOTIDE SEQUENCE [LARGE SCALE GENOMIC DNA]</scope>
    <scope>GENOME REANNOTATION</scope>
    <source>
        <strain>ATCC BAA-935 / AF2122/97</strain>
    </source>
</reference>